<protein>
    <recommendedName>
        <fullName>Bone morphogenetic protein 8B</fullName>
        <shortName>BMP-8B</shortName>
    </recommendedName>
</protein>
<feature type="signal peptide" evidence="2">
    <location>
        <begin position="1"/>
        <end position="19"/>
    </location>
</feature>
<feature type="propeptide" id="PRO_0000033886" evidence="2">
    <location>
        <begin position="20"/>
        <end position="260"/>
    </location>
</feature>
<feature type="chain" id="PRO_0000033887" description="Bone morphogenetic protein 8B">
    <location>
        <begin position="261"/>
        <end position="399"/>
    </location>
</feature>
<feature type="glycosylation site" description="N-linked (GlcNAc...) asparagine" evidence="2">
    <location>
        <position position="155"/>
    </location>
</feature>
<feature type="glycosylation site" description="N-linked (GlcNAc...) asparagine" evidence="2">
    <location>
        <position position="340"/>
    </location>
</feature>
<feature type="disulfide bond" evidence="1">
    <location>
        <begin position="298"/>
        <end position="364"/>
    </location>
</feature>
<feature type="disulfide bond" evidence="1">
    <location>
        <begin position="327"/>
        <end position="396"/>
    </location>
</feature>
<feature type="disulfide bond" evidence="1">
    <location>
        <begin position="331"/>
        <end position="398"/>
    </location>
</feature>
<feature type="disulfide bond" description="Interchain" evidence="1">
    <location>
        <position position="363"/>
    </location>
</feature>
<feature type="sequence conflict" description="In Ref. 1; AAB17573." evidence="7" ref="1">
    <original>L</original>
    <variation>F</variation>
    <location>
        <position position="158"/>
    </location>
</feature>
<feature type="sequence conflict" description="In Ref. 1; AAB17573." evidence="7" ref="1">
    <original>F</original>
    <variation>S</variation>
    <location>
        <position position="177"/>
    </location>
</feature>
<feature type="sequence conflict" description="In Ref. 1; AAB17573." evidence="7" ref="1">
    <original>S</original>
    <variation>G</variation>
    <location>
        <position position="224"/>
    </location>
</feature>
<feature type="sequence conflict" description="In Ref. 1; AAB17573." evidence="7" ref="1">
    <original>RH</original>
    <variation>TG</variation>
    <location>
        <begin position="300"/>
        <end position="301"/>
    </location>
</feature>
<evidence type="ECO:0000250" key="1"/>
<evidence type="ECO:0000255" key="2"/>
<evidence type="ECO:0000269" key="3">
    <source>
    </source>
</evidence>
<evidence type="ECO:0000269" key="4">
    <source>
    </source>
</evidence>
<evidence type="ECO:0000269" key="5">
    <source>
    </source>
</evidence>
<evidence type="ECO:0000269" key="6">
    <source>
    </source>
</evidence>
<evidence type="ECO:0000305" key="7"/>
<evidence type="ECO:0000305" key="8">
    <source>
    </source>
</evidence>
<dbReference type="EMBL" id="U39545">
    <property type="protein sequence ID" value="AAB17573.1"/>
    <property type="molecule type" value="mRNA"/>
</dbReference>
<dbReference type="EMBL" id="AK082895">
    <property type="protein sequence ID" value="BAC38674.1"/>
    <property type="molecule type" value="mRNA"/>
</dbReference>
<dbReference type="EMBL" id="CH466552">
    <property type="protein sequence ID" value="EDL30390.1"/>
    <property type="molecule type" value="Genomic_DNA"/>
</dbReference>
<dbReference type="EMBL" id="BC137890">
    <property type="protein sequence ID" value="AAI37891.1"/>
    <property type="molecule type" value="mRNA"/>
</dbReference>
<dbReference type="CCDS" id="CCDS18608.1"/>
<dbReference type="RefSeq" id="NP_031585.2">
    <property type="nucleotide sequence ID" value="NM_007559.5"/>
</dbReference>
<dbReference type="SMR" id="P55105"/>
<dbReference type="FunCoup" id="P55105">
    <property type="interactions" value="649"/>
</dbReference>
<dbReference type="STRING" id="10090.ENSMUSP00000002457"/>
<dbReference type="GlyCosmos" id="P55105">
    <property type="glycosylation" value="2 sites, No reported glycans"/>
</dbReference>
<dbReference type="GlyGen" id="P55105">
    <property type="glycosylation" value="2 sites"/>
</dbReference>
<dbReference type="PhosphoSitePlus" id="P55105"/>
<dbReference type="jPOST" id="P55105"/>
<dbReference type="PaxDb" id="10090-ENSMUSP00000002457"/>
<dbReference type="PeptideAtlas" id="P55105"/>
<dbReference type="ProteomicsDB" id="273788"/>
<dbReference type="DNASU" id="12164"/>
<dbReference type="Ensembl" id="ENSMUST00000002457.2">
    <property type="protein sequence ID" value="ENSMUSP00000002457.2"/>
    <property type="gene ID" value="ENSMUSG00000002384.3"/>
</dbReference>
<dbReference type="GeneID" id="12164"/>
<dbReference type="KEGG" id="mmu:12164"/>
<dbReference type="UCSC" id="uc008uot.1">
    <property type="organism name" value="mouse"/>
</dbReference>
<dbReference type="AGR" id="MGI:107335"/>
<dbReference type="CTD" id="656"/>
<dbReference type="MGI" id="MGI:107335">
    <property type="gene designation" value="Bmp8b"/>
</dbReference>
<dbReference type="VEuPathDB" id="HostDB:ENSMUSG00000002384"/>
<dbReference type="eggNOG" id="KOG3900">
    <property type="taxonomic scope" value="Eukaryota"/>
</dbReference>
<dbReference type="GeneTree" id="ENSGT00940000164770"/>
<dbReference type="HOGENOM" id="CLU_020515_4_1_1"/>
<dbReference type="InParanoid" id="P55105"/>
<dbReference type="OMA" id="YCAGECI"/>
<dbReference type="OrthoDB" id="5987191at2759"/>
<dbReference type="PhylomeDB" id="P55105"/>
<dbReference type="TreeFam" id="TF316134"/>
<dbReference type="BioGRID-ORCS" id="12164">
    <property type="hits" value="3 hits in 79 CRISPR screens"/>
</dbReference>
<dbReference type="PRO" id="PR:P55105"/>
<dbReference type="Proteomes" id="UP000000589">
    <property type="component" value="Chromosome 4"/>
</dbReference>
<dbReference type="RNAct" id="P55105">
    <property type="molecule type" value="protein"/>
</dbReference>
<dbReference type="Bgee" id="ENSMUSG00000002384">
    <property type="expression patterns" value="Expressed in ectoplacental cone and 43 other cell types or tissues"/>
</dbReference>
<dbReference type="GO" id="GO:0005615">
    <property type="term" value="C:extracellular space"/>
    <property type="evidence" value="ECO:0007669"/>
    <property type="project" value="UniProtKB-KW"/>
</dbReference>
<dbReference type="GO" id="GO:0005125">
    <property type="term" value="F:cytokine activity"/>
    <property type="evidence" value="ECO:0000304"/>
    <property type="project" value="MGI"/>
</dbReference>
<dbReference type="GO" id="GO:0008083">
    <property type="term" value="F:growth factor activity"/>
    <property type="evidence" value="ECO:0007669"/>
    <property type="project" value="UniProtKB-KW"/>
</dbReference>
<dbReference type="GO" id="GO:0030509">
    <property type="term" value="P:BMP signaling pathway"/>
    <property type="evidence" value="ECO:0000315"/>
    <property type="project" value="UniProtKB"/>
</dbReference>
<dbReference type="GO" id="GO:0051216">
    <property type="term" value="P:cartilage development"/>
    <property type="evidence" value="ECO:0007669"/>
    <property type="project" value="UniProtKB-KW"/>
</dbReference>
<dbReference type="GO" id="GO:0002024">
    <property type="term" value="P:diet induced thermogenesis"/>
    <property type="evidence" value="ECO:0000315"/>
    <property type="project" value="UniProtKB"/>
</dbReference>
<dbReference type="GO" id="GO:0048598">
    <property type="term" value="P:embryonic morphogenesis"/>
    <property type="evidence" value="ECO:0000315"/>
    <property type="project" value="UniProtKB"/>
</dbReference>
<dbReference type="GO" id="GO:0097009">
    <property type="term" value="P:energy homeostasis"/>
    <property type="evidence" value="ECO:0000315"/>
    <property type="project" value="UniProtKB"/>
</dbReference>
<dbReference type="GO" id="GO:0007281">
    <property type="term" value="P:germ cell development"/>
    <property type="evidence" value="ECO:0000315"/>
    <property type="project" value="UniProtKB"/>
</dbReference>
<dbReference type="GO" id="GO:0001503">
    <property type="term" value="P:ossification"/>
    <property type="evidence" value="ECO:0007669"/>
    <property type="project" value="UniProtKB-KW"/>
</dbReference>
<dbReference type="GO" id="GO:0007283">
    <property type="term" value="P:spermatogenesis"/>
    <property type="evidence" value="ECO:0000315"/>
    <property type="project" value="MGI"/>
</dbReference>
<dbReference type="GO" id="GO:0007179">
    <property type="term" value="P:transforming growth factor beta receptor signaling pathway"/>
    <property type="evidence" value="ECO:0000304"/>
    <property type="project" value="MGI"/>
</dbReference>
<dbReference type="FunFam" id="2.60.120.970:FF:000017">
    <property type="entry name" value="Bone morphogenetic protein 8a"/>
    <property type="match status" value="1"/>
</dbReference>
<dbReference type="FunFam" id="2.10.90.10:FF:000020">
    <property type="entry name" value="bone morphogenetic protein 8B"/>
    <property type="match status" value="1"/>
</dbReference>
<dbReference type="Gene3D" id="2.60.120.970">
    <property type="match status" value="1"/>
</dbReference>
<dbReference type="Gene3D" id="2.10.90.10">
    <property type="entry name" value="Cystine-knot cytokines"/>
    <property type="match status" value="1"/>
</dbReference>
<dbReference type="InterPro" id="IPR029034">
    <property type="entry name" value="Cystine-knot_cytokine"/>
</dbReference>
<dbReference type="InterPro" id="IPR001839">
    <property type="entry name" value="TGF-b_C"/>
</dbReference>
<dbReference type="InterPro" id="IPR001111">
    <property type="entry name" value="TGF-b_propeptide"/>
</dbReference>
<dbReference type="InterPro" id="IPR015615">
    <property type="entry name" value="TGF-beta-rel"/>
</dbReference>
<dbReference type="InterPro" id="IPR017948">
    <property type="entry name" value="TGFb_CS"/>
</dbReference>
<dbReference type="PANTHER" id="PTHR11848:SF132">
    <property type="entry name" value="BONE MORPHOGENETIC PROTEIN 8B"/>
    <property type="match status" value="1"/>
</dbReference>
<dbReference type="PANTHER" id="PTHR11848">
    <property type="entry name" value="TGF-BETA FAMILY"/>
    <property type="match status" value="1"/>
</dbReference>
<dbReference type="Pfam" id="PF00019">
    <property type="entry name" value="TGF_beta"/>
    <property type="match status" value="1"/>
</dbReference>
<dbReference type="Pfam" id="PF00688">
    <property type="entry name" value="TGFb_propeptide"/>
    <property type="match status" value="1"/>
</dbReference>
<dbReference type="SMART" id="SM00204">
    <property type="entry name" value="TGFB"/>
    <property type="match status" value="1"/>
</dbReference>
<dbReference type="SUPFAM" id="SSF57501">
    <property type="entry name" value="Cystine-knot cytokines"/>
    <property type="match status" value="1"/>
</dbReference>
<dbReference type="PROSITE" id="PS00250">
    <property type="entry name" value="TGF_BETA_1"/>
    <property type="match status" value="1"/>
</dbReference>
<dbReference type="PROSITE" id="PS51362">
    <property type="entry name" value="TGF_BETA_2"/>
    <property type="match status" value="1"/>
</dbReference>
<proteinExistence type="evidence at protein level"/>
<name>BMP8B_MOUSE</name>
<sequence>MAARPGLLWLLGLALCVLGGGHLSHPPHVFPQRRLGVREPRDMQREIREVLGLPGRPRSRAPVGAAQQPASAPLFMLDLYRAMTDDSGGGTPQPHLDRADLIMSFVNIVERDRTLGYQEPHWKEFHFDLTQIPAGEAVTAAEFRIYKEPSTHPLNTTLHISMFEVVQEHSNRESDLFFLDLQTLRSGDEGWLVLDITAASDRWLLNHHKDLGLRLYVETEDGHSIDPGLAGLLGRQAPRSRQPFMVGFFRANQSPVRAPRTARPLKKKQLNQINQLPHSNKHLGILDDGHGSHGREVCRRHELYVSFRDLGWLDSVIAPQGYSAYYCAGECIYPLNSCMNSTNHATMQALVHLMKPDIIPKVCCVPTELSAISLLYYDRNNNVILRRERNMVVQACGCH</sequence>
<accession>P55105</accession>
<accession>Q8BNM2</accession>
<gene>
    <name type="primary">Bmp8b</name>
</gene>
<reference key="1">
    <citation type="journal article" date="1996" name="Mech. Dev.">
        <title>Evidence that mouse Bmp8a (Op2) and Bmp8b are duplicated genes that play a role in spermatogenesis and placental development.</title>
        <authorList>
            <person name="Zhao G.Q."/>
            <person name="Hogan B.L."/>
        </authorList>
    </citation>
    <scope>NUCLEOTIDE SEQUENCE [MRNA]</scope>
    <source>
        <strain>ICR</strain>
        <tissue>Placenta</tissue>
    </source>
</reference>
<reference key="2">
    <citation type="journal article" date="2005" name="Science">
        <title>The transcriptional landscape of the mammalian genome.</title>
        <authorList>
            <person name="Carninci P."/>
            <person name="Kasukawa T."/>
            <person name="Katayama S."/>
            <person name="Gough J."/>
            <person name="Frith M.C."/>
            <person name="Maeda N."/>
            <person name="Oyama R."/>
            <person name="Ravasi T."/>
            <person name="Lenhard B."/>
            <person name="Wells C."/>
            <person name="Kodzius R."/>
            <person name="Shimokawa K."/>
            <person name="Bajic V.B."/>
            <person name="Brenner S.E."/>
            <person name="Batalov S."/>
            <person name="Forrest A.R."/>
            <person name="Zavolan M."/>
            <person name="Davis M.J."/>
            <person name="Wilming L.G."/>
            <person name="Aidinis V."/>
            <person name="Allen J.E."/>
            <person name="Ambesi-Impiombato A."/>
            <person name="Apweiler R."/>
            <person name="Aturaliya R.N."/>
            <person name="Bailey T.L."/>
            <person name="Bansal M."/>
            <person name="Baxter L."/>
            <person name="Beisel K.W."/>
            <person name="Bersano T."/>
            <person name="Bono H."/>
            <person name="Chalk A.M."/>
            <person name="Chiu K.P."/>
            <person name="Choudhary V."/>
            <person name="Christoffels A."/>
            <person name="Clutterbuck D.R."/>
            <person name="Crowe M.L."/>
            <person name="Dalla E."/>
            <person name="Dalrymple B.P."/>
            <person name="de Bono B."/>
            <person name="Della Gatta G."/>
            <person name="di Bernardo D."/>
            <person name="Down T."/>
            <person name="Engstrom P."/>
            <person name="Fagiolini M."/>
            <person name="Faulkner G."/>
            <person name="Fletcher C.F."/>
            <person name="Fukushima T."/>
            <person name="Furuno M."/>
            <person name="Futaki S."/>
            <person name="Gariboldi M."/>
            <person name="Georgii-Hemming P."/>
            <person name="Gingeras T.R."/>
            <person name="Gojobori T."/>
            <person name="Green R.E."/>
            <person name="Gustincich S."/>
            <person name="Harbers M."/>
            <person name="Hayashi Y."/>
            <person name="Hensch T.K."/>
            <person name="Hirokawa N."/>
            <person name="Hill D."/>
            <person name="Huminiecki L."/>
            <person name="Iacono M."/>
            <person name="Ikeo K."/>
            <person name="Iwama A."/>
            <person name="Ishikawa T."/>
            <person name="Jakt M."/>
            <person name="Kanapin A."/>
            <person name="Katoh M."/>
            <person name="Kawasawa Y."/>
            <person name="Kelso J."/>
            <person name="Kitamura H."/>
            <person name="Kitano H."/>
            <person name="Kollias G."/>
            <person name="Krishnan S.P."/>
            <person name="Kruger A."/>
            <person name="Kummerfeld S.K."/>
            <person name="Kurochkin I.V."/>
            <person name="Lareau L.F."/>
            <person name="Lazarevic D."/>
            <person name="Lipovich L."/>
            <person name="Liu J."/>
            <person name="Liuni S."/>
            <person name="McWilliam S."/>
            <person name="Madan Babu M."/>
            <person name="Madera M."/>
            <person name="Marchionni L."/>
            <person name="Matsuda H."/>
            <person name="Matsuzawa S."/>
            <person name="Miki H."/>
            <person name="Mignone F."/>
            <person name="Miyake S."/>
            <person name="Morris K."/>
            <person name="Mottagui-Tabar S."/>
            <person name="Mulder N."/>
            <person name="Nakano N."/>
            <person name="Nakauchi H."/>
            <person name="Ng P."/>
            <person name="Nilsson R."/>
            <person name="Nishiguchi S."/>
            <person name="Nishikawa S."/>
            <person name="Nori F."/>
            <person name="Ohara O."/>
            <person name="Okazaki Y."/>
            <person name="Orlando V."/>
            <person name="Pang K.C."/>
            <person name="Pavan W.J."/>
            <person name="Pavesi G."/>
            <person name="Pesole G."/>
            <person name="Petrovsky N."/>
            <person name="Piazza S."/>
            <person name="Reed J."/>
            <person name="Reid J.F."/>
            <person name="Ring B.Z."/>
            <person name="Ringwald M."/>
            <person name="Rost B."/>
            <person name="Ruan Y."/>
            <person name="Salzberg S.L."/>
            <person name="Sandelin A."/>
            <person name="Schneider C."/>
            <person name="Schoenbach C."/>
            <person name="Sekiguchi K."/>
            <person name="Semple C.A."/>
            <person name="Seno S."/>
            <person name="Sessa L."/>
            <person name="Sheng Y."/>
            <person name="Shibata Y."/>
            <person name="Shimada H."/>
            <person name="Shimada K."/>
            <person name="Silva D."/>
            <person name="Sinclair B."/>
            <person name="Sperling S."/>
            <person name="Stupka E."/>
            <person name="Sugiura K."/>
            <person name="Sultana R."/>
            <person name="Takenaka Y."/>
            <person name="Taki K."/>
            <person name="Tammoja K."/>
            <person name="Tan S.L."/>
            <person name="Tang S."/>
            <person name="Taylor M.S."/>
            <person name="Tegner J."/>
            <person name="Teichmann S.A."/>
            <person name="Ueda H.R."/>
            <person name="van Nimwegen E."/>
            <person name="Verardo R."/>
            <person name="Wei C.L."/>
            <person name="Yagi K."/>
            <person name="Yamanishi H."/>
            <person name="Zabarovsky E."/>
            <person name="Zhu S."/>
            <person name="Zimmer A."/>
            <person name="Hide W."/>
            <person name="Bult C."/>
            <person name="Grimmond S.M."/>
            <person name="Teasdale R.D."/>
            <person name="Liu E.T."/>
            <person name="Brusic V."/>
            <person name="Quackenbush J."/>
            <person name="Wahlestedt C."/>
            <person name="Mattick J.S."/>
            <person name="Hume D.A."/>
            <person name="Kai C."/>
            <person name="Sasaki D."/>
            <person name="Tomaru Y."/>
            <person name="Fukuda S."/>
            <person name="Kanamori-Katayama M."/>
            <person name="Suzuki M."/>
            <person name="Aoki J."/>
            <person name="Arakawa T."/>
            <person name="Iida J."/>
            <person name="Imamura K."/>
            <person name="Itoh M."/>
            <person name="Kato T."/>
            <person name="Kawaji H."/>
            <person name="Kawagashira N."/>
            <person name="Kawashima T."/>
            <person name="Kojima M."/>
            <person name="Kondo S."/>
            <person name="Konno H."/>
            <person name="Nakano K."/>
            <person name="Ninomiya N."/>
            <person name="Nishio T."/>
            <person name="Okada M."/>
            <person name="Plessy C."/>
            <person name="Shibata K."/>
            <person name="Shiraki T."/>
            <person name="Suzuki S."/>
            <person name="Tagami M."/>
            <person name="Waki K."/>
            <person name="Watahiki A."/>
            <person name="Okamura-Oho Y."/>
            <person name="Suzuki H."/>
            <person name="Kawai J."/>
            <person name="Hayashizaki Y."/>
        </authorList>
    </citation>
    <scope>NUCLEOTIDE SEQUENCE [LARGE SCALE MRNA]</scope>
    <source>
        <strain>C57BL/6J</strain>
    </source>
</reference>
<reference key="3">
    <citation type="submission" date="2005-09" db="EMBL/GenBank/DDBJ databases">
        <authorList>
            <person name="Mural R.J."/>
            <person name="Adams M.D."/>
            <person name="Myers E.W."/>
            <person name="Smith H.O."/>
            <person name="Venter J.C."/>
        </authorList>
    </citation>
    <scope>NUCLEOTIDE SEQUENCE [LARGE SCALE GENOMIC DNA]</scope>
</reference>
<reference key="4">
    <citation type="journal article" date="2004" name="Genome Res.">
        <title>The status, quality, and expansion of the NIH full-length cDNA project: the Mammalian Gene Collection (MGC).</title>
        <authorList>
            <consortium name="The MGC Project Team"/>
        </authorList>
    </citation>
    <scope>NUCLEOTIDE SEQUENCE [LARGE SCALE MRNA]</scope>
    <source>
        <tissue>Brain</tissue>
    </source>
</reference>
<reference key="5">
    <citation type="journal article" date="1996" name="Genes Dev.">
        <title>The gene encoding bone morphogenetic protein 8B is required for the initiation and maintenance of spermatogenesis in the mouse.</title>
        <authorList>
            <person name="Zhao G.Q."/>
            <person name="Deng K."/>
            <person name="Labosky P.A."/>
            <person name="Liaw L."/>
            <person name="Hogan B.L."/>
        </authorList>
    </citation>
    <scope>FUNCTION</scope>
</reference>
<reference key="6">
    <citation type="journal article" date="2000" name="Mol. Endocrinol.">
        <title>Requirement of Bmp8b for the generation of primordial germ cells in the mouse.</title>
        <authorList>
            <person name="Ying Y."/>
            <person name="Liu X.M."/>
            <person name="Marble A."/>
            <person name="Lawson K.A."/>
            <person name="Zhao G.Q."/>
        </authorList>
    </citation>
    <scope>FUNCTION</scope>
    <scope>TISSUE SPECIFICITY</scope>
    <scope>DISRUPTION PHENOTYPE</scope>
</reference>
<reference key="7">
    <citation type="journal article" date="2001" name="Proc. Natl. Acad. Sci. U.S.A.">
        <title>Induction of primordial germ cells from murine epiblasts by synergistic action of BMP4 and BMP8B signaling pathways.</title>
        <authorList>
            <person name="Ying Y."/>
            <person name="Qi X."/>
            <person name="Zhao G.Q."/>
        </authorList>
    </citation>
    <scope>FUNCTION</scope>
    <scope>SUBUNIT</scope>
</reference>
<reference key="8">
    <citation type="journal article" date="2012" name="Cell">
        <title>BMP8B increases brown adipose tissue thermogenesis through both central and peripheral actions.</title>
        <authorList>
            <person name="Whittle A.J."/>
            <person name="Carobbio S."/>
            <person name="Martins L."/>
            <person name="Slawik M."/>
            <person name="Hondares E."/>
            <person name="Vazquez M.J."/>
            <person name="Morgan D."/>
            <person name="Csikasz R.I."/>
            <person name="Gallego R."/>
            <person name="Rodriguez-Cuenca S."/>
            <person name="Dale M."/>
            <person name="Virtue S."/>
            <person name="Villarroya F."/>
            <person name="Cannon B."/>
            <person name="Rahmouni K."/>
            <person name="Lopez M."/>
            <person name="Vidal-Puig A."/>
        </authorList>
    </citation>
    <scope>FUNCTION</scope>
    <scope>INDUCTION</scope>
    <scope>TISSUE SPECIFICITY</scope>
</reference>
<keyword id="KW-0891">Chondrogenesis</keyword>
<keyword id="KW-0202">Cytokine</keyword>
<keyword id="KW-0217">Developmental protein</keyword>
<keyword id="KW-0221">Differentiation</keyword>
<keyword id="KW-1015">Disulfide bond</keyword>
<keyword id="KW-0325">Glycoprotein</keyword>
<keyword id="KW-0339">Growth factor</keyword>
<keyword id="KW-0892">Osteogenesis</keyword>
<keyword id="KW-1185">Reference proteome</keyword>
<keyword id="KW-0964">Secreted</keyword>
<keyword id="KW-0732">Signal</keyword>
<keyword id="KW-0744">Spermatogenesis</keyword>
<comment type="function">
    <text evidence="1 3 4 5 6">Induces cartilage and bone formation. May be the osteoinductive factor responsible for the phenomenon of epithelial osteogenesis. Plays a role in calcium regulation and bone homeostasis (By similarity). Involved in the generation of primordial germ cells; this function involves Bmp4 in a synergistic manner though separate receptor complexes seem to be involved. Required for the initiation and maintenance of spermatogenesis. Signaling protein involved in regulation of thermogenesis and energy balance. Proposed to increase the peripheral response of brown adipose tissue (BAT) to adrenergic stimulation while acting centrally in the hypothalamus to increase sympathetic output to BAT.</text>
</comment>
<comment type="subunit">
    <text evidence="8">Homodimer; disulfide-linked.</text>
</comment>
<comment type="subcellular location">
    <subcellularLocation>
        <location evidence="1">Secreted</location>
    </subcellularLocation>
</comment>
<comment type="tissue specificity">
    <text evidence="3 5">Expressed in testis. Expressed in decidual cells of the uterus and in trophoblast cells of the labyrinthine region of the placenta and in the inner root sheath of hair follicles of early postnatal skin. Expressed in the extraembryonic ectoderm in pregastrula and gastrula stage mouse embryos. Expressed in brown adipose tissue and brain.</text>
</comment>
<comment type="developmental stage">
    <text>Expressed during specific stages of spermatogenesis, with highest levels in stage 6-8 round spermatids after 3 weeks of age.</text>
</comment>
<comment type="induction">
    <text evidence="5">By feeding with high-fat diet and cold exposure. By beta-3-adrenergic receptor activation and thyroid hormone treatment.</text>
</comment>
<comment type="disruption phenotype">
    <text evidence="3">Absence of primordial germ cells, short or missing allantois.</text>
</comment>
<comment type="similarity">
    <text evidence="7">Belongs to the TGF-beta family.</text>
</comment>
<organism>
    <name type="scientific">Mus musculus</name>
    <name type="common">Mouse</name>
    <dbReference type="NCBI Taxonomy" id="10090"/>
    <lineage>
        <taxon>Eukaryota</taxon>
        <taxon>Metazoa</taxon>
        <taxon>Chordata</taxon>
        <taxon>Craniata</taxon>
        <taxon>Vertebrata</taxon>
        <taxon>Euteleostomi</taxon>
        <taxon>Mammalia</taxon>
        <taxon>Eutheria</taxon>
        <taxon>Euarchontoglires</taxon>
        <taxon>Glires</taxon>
        <taxon>Rodentia</taxon>
        <taxon>Myomorpha</taxon>
        <taxon>Muroidea</taxon>
        <taxon>Muridae</taxon>
        <taxon>Murinae</taxon>
        <taxon>Mus</taxon>
        <taxon>Mus</taxon>
    </lineage>
</organism>